<dbReference type="EC" id="7.6.2.10" evidence="1"/>
<dbReference type="EMBL" id="CP000136">
    <property type="protein sequence ID" value="ABC93288.1"/>
    <property type="molecule type" value="Genomic_DNA"/>
</dbReference>
<dbReference type="RefSeq" id="WP_011427708.1">
    <property type="nucleotide sequence ID" value="NC_007764.1"/>
</dbReference>
<dbReference type="SMR" id="Q2K1C8"/>
<dbReference type="KEGG" id="ret:RHE_PC00081"/>
<dbReference type="eggNOG" id="COG3842">
    <property type="taxonomic scope" value="Bacteria"/>
</dbReference>
<dbReference type="HOGENOM" id="CLU_000604_1_1_5"/>
<dbReference type="OrthoDB" id="394852at2"/>
<dbReference type="Proteomes" id="UP000001936">
    <property type="component" value="Plasmid p42c"/>
</dbReference>
<dbReference type="GO" id="GO:0055052">
    <property type="term" value="C:ATP-binding cassette (ABC) transporter complex, substrate-binding subunit-containing"/>
    <property type="evidence" value="ECO:0007669"/>
    <property type="project" value="TreeGrafter"/>
</dbReference>
<dbReference type="GO" id="GO:0015430">
    <property type="term" value="F:ABC-type glycerol-3-phosphate transporter activity"/>
    <property type="evidence" value="ECO:0007669"/>
    <property type="project" value="UniProtKB-EC"/>
</dbReference>
<dbReference type="GO" id="GO:0005524">
    <property type="term" value="F:ATP binding"/>
    <property type="evidence" value="ECO:0007669"/>
    <property type="project" value="UniProtKB-KW"/>
</dbReference>
<dbReference type="GO" id="GO:0016887">
    <property type="term" value="F:ATP hydrolysis activity"/>
    <property type="evidence" value="ECO:0007669"/>
    <property type="project" value="InterPro"/>
</dbReference>
<dbReference type="GO" id="GO:0008643">
    <property type="term" value="P:carbohydrate transport"/>
    <property type="evidence" value="ECO:0007669"/>
    <property type="project" value="InterPro"/>
</dbReference>
<dbReference type="GO" id="GO:0001407">
    <property type="term" value="P:glycerophosphodiester transmembrane transport"/>
    <property type="evidence" value="ECO:0007669"/>
    <property type="project" value="TreeGrafter"/>
</dbReference>
<dbReference type="CDD" id="cd03301">
    <property type="entry name" value="ABC_MalK_N"/>
    <property type="match status" value="1"/>
</dbReference>
<dbReference type="FunFam" id="3.40.50.300:FF:000042">
    <property type="entry name" value="Maltose/maltodextrin ABC transporter, ATP-binding protein"/>
    <property type="match status" value="1"/>
</dbReference>
<dbReference type="Gene3D" id="2.40.50.100">
    <property type="match status" value="1"/>
</dbReference>
<dbReference type="Gene3D" id="2.40.50.140">
    <property type="entry name" value="Nucleic acid-binding proteins"/>
    <property type="match status" value="1"/>
</dbReference>
<dbReference type="Gene3D" id="3.40.50.300">
    <property type="entry name" value="P-loop containing nucleotide triphosphate hydrolases"/>
    <property type="match status" value="1"/>
</dbReference>
<dbReference type="InterPro" id="IPR003593">
    <property type="entry name" value="AAA+_ATPase"/>
</dbReference>
<dbReference type="InterPro" id="IPR003439">
    <property type="entry name" value="ABC_transporter-like_ATP-bd"/>
</dbReference>
<dbReference type="InterPro" id="IPR017871">
    <property type="entry name" value="ABC_transporter-like_CS"/>
</dbReference>
<dbReference type="InterPro" id="IPR015855">
    <property type="entry name" value="ABC_transpr_MalK-like"/>
</dbReference>
<dbReference type="InterPro" id="IPR047641">
    <property type="entry name" value="ABC_transpr_MalK/UgpC-like"/>
</dbReference>
<dbReference type="InterPro" id="IPR008995">
    <property type="entry name" value="Mo/tungstate-bd_C_term_dom"/>
</dbReference>
<dbReference type="InterPro" id="IPR012340">
    <property type="entry name" value="NA-bd_OB-fold"/>
</dbReference>
<dbReference type="InterPro" id="IPR027417">
    <property type="entry name" value="P-loop_NTPase"/>
</dbReference>
<dbReference type="InterPro" id="IPR013611">
    <property type="entry name" value="Transp-assoc_OB_typ2"/>
</dbReference>
<dbReference type="NCBIfam" id="NF008653">
    <property type="entry name" value="PRK11650.1"/>
    <property type="match status" value="1"/>
</dbReference>
<dbReference type="PANTHER" id="PTHR43875">
    <property type="entry name" value="MALTODEXTRIN IMPORT ATP-BINDING PROTEIN MSMX"/>
    <property type="match status" value="1"/>
</dbReference>
<dbReference type="PANTHER" id="PTHR43875:SF12">
    <property type="entry name" value="SN-GLYCEROL-3-PHOSPHATE IMPORT ATP-BINDING PROTEIN UGPC"/>
    <property type="match status" value="1"/>
</dbReference>
<dbReference type="Pfam" id="PF00005">
    <property type="entry name" value="ABC_tran"/>
    <property type="match status" value="1"/>
</dbReference>
<dbReference type="Pfam" id="PF08402">
    <property type="entry name" value="TOBE_2"/>
    <property type="match status" value="1"/>
</dbReference>
<dbReference type="SMART" id="SM00382">
    <property type="entry name" value="AAA"/>
    <property type="match status" value="1"/>
</dbReference>
<dbReference type="SUPFAM" id="SSF50331">
    <property type="entry name" value="MOP-like"/>
    <property type="match status" value="1"/>
</dbReference>
<dbReference type="SUPFAM" id="SSF52540">
    <property type="entry name" value="P-loop containing nucleoside triphosphate hydrolases"/>
    <property type="match status" value="1"/>
</dbReference>
<dbReference type="PROSITE" id="PS00211">
    <property type="entry name" value="ABC_TRANSPORTER_1"/>
    <property type="match status" value="1"/>
</dbReference>
<dbReference type="PROSITE" id="PS50893">
    <property type="entry name" value="ABC_TRANSPORTER_2"/>
    <property type="match status" value="1"/>
</dbReference>
<dbReference type="PROSITE" id="PS51315">
    <property type="entry name" value="UGPC"/>
    <property type="match status" value="1"/>
</dbReference>
<proteinExistence type="inferred from homology"/>
<reference key="1">
    <citation type="journal article" date="2006" name="Proc. Natl. Acad. Sci. U.S.A.">
        <title>The partitioned Rhizobium etli genome: genetic and metabolic redundancy in seven interacting replicons.</title>
        <authorList>
            <person name="Gonzalez V."/>
            <person name="Santamaria R.I."/>
            <person name="Bustos P."/>
            <person name="Hernandez-Gonzalez I."/>
            <person name="Medrano-Soto A."/>
            <person name="Moreno-Hagelsieb G."/>
            <person name="Janga S.C."/>
            <person name="Ramirez M.A."/>
            <person name="Jimenez-Jacinto V."/>
            <person name="Collado-Vides J."/>
            <person name="Davila G."/>
        </authorList>
    </citation>
    <scope>NUCLEOTIDE SEQUENCE [LARGE SCALE GENOMIC DNA]</scope>
    <source>
        <strain>ATCC 51251 / DSM 11541 / JCM 21823 / NBRC 15573 / CFN 42</strain>
    </source>
</reference>
<name>UGPC3_RHIEC</name>
<gene>
    <name evidence="1" type="primary">ugpC3</name>
    <name type="ordered locus">RHE_PC00081</name>
</gene>
<geneLocation type="plasmid">
    <name>p42c</name>
</geneLocation>
<comment type="function">
    <text evidence="1">Part of the ABC transporter complex UgpBAEC involved in sn-glycerol-3-phosphate (G3P) import. Responsible for energy coupling to the transport system.</text>
</comment>
<comment type="catalytic activity">
    <reaction evidence="1">
        <text>sn-glycerol 3-phosphate(out) + ATP + H2O = sn-glycerol 3-phosphate(in) + ADP + phosphate + H(+)</text>
        <dbReference type="Rhea" id="RHEA:21668"/>
        <dbReference type="ChEBI" id="CHEBI:15377"/>
        <dbReference type="ChEBI" id="CHEBI:15378"/>
        <dbReference type="ChEBI" id="CHEBI:30616"/>
        <dbReference type="ChEBI" id="CHEBI:43474"/>
        <dbReference type="ChEBI" id="CHEBI:57597"/>
        <dbReference type="ChEBI" id="CHEBI:456216"/>
        <dbReference type="EC" id="7.6.2.10"/>
    </reaction>
</comment>
<comment type="subunit">
    <text evidence="1">The complex is composed of two ATP-binding proteins (UgpC), two transmembrane proteins (UgpA and UgpE) and a solute-binding protein (UgpB).</text>
</comment>
<comment type="subcellular location">
    <subcellularLocation>
        <location evidence="1">Cell inner membrane</location>
        <topology evidence="1">Peripheral membrane protein</topology>
    </subcellularLocation>
</comment>
<comment type="similarity">
    <text evidence="1">Belongs to the ABC transporter superfamily. sn-glycerol-3-phosphate importer (TC 3.A.1.1.3) family.</text>
</comment>
<protein>
    <recommendedName>
        <fullName evidence="1">sn-glycerol-3-phosphate import ATP-binding protein UgpC 3</fullName>
        <ecNumber evidence="1">7.6.2.10</ecNumber>
    </recommendedName>
</protein>
<feature type="chain" id="PRO_0000289764" description="sn-glycerol-3-phosphate import ATP-binding protein UgpC 3">
    <location>
        <begin position="1"/>
        <end position="348"/>
    </location>
</feature>
<feature type="domain" description="ABC transporter" evidence="1">
    <location>
        <begin position="4"/>
        <end position="234"/>
    </location>
</feature>
<feature type="binding site" evidence="1">
    <location>
        <begin position="36"/>
        <end position="43"/>
    </location>
    <ligand>
        <name>ATP</name>
        <dbReference type="ChEBI" id="CHEBI:30616"/>
    </ligand>
</feature>
<organism>
    <name type="scientific">Rhizobium etli (strain ATCC 51251 / DSM 11541 / JCM 21823 / NBRC 15573 / CFN 42)</name>
    <dbReference type="NCBI Taxonomy" id="347834"/>
    <lineage>
        <taxon>Bacteria</taxon>
        <taxon>Pseudomonadati</taxon>
        <taxon>Pseudomonadota</taxon>
        <taxon>Alphaproteobacteria</taxon>
        <taxon>Hyphomicrobiales</taxon>
        <taxon>Rhizobiaceae</taxon>
        <taxon>Rhizobium/Agrobacterium group</taxon>
        <taxon>Rhizobium</taxon>
    </lineage>
</organism>
<evidence type="ECO:0000255" key="1">
    <source>
        <dbReference type="HAMAP-Rule" id="MF_01727"/>
    </source>
</evidence>
<keyword id="KW-0067">ATP-binding</keyword>
<keyword id="KW-0997">Cell inner membrane</keyword>
<keyword id="KW-1003">Cell membrane</keyword>
<keyword id="KW-0472">Membrane</keyword>
<keyword id="KW-0547">Nucleotide-binding</keyword>
<keyword id="KW-0614">Plasmid</keyword>
<keyword id="KW-1185">Reference proteome</keyword>
<keyword id="KW-0762">Sugar transport</keyword>
<keyword id="KW-1278">Translocase</keyword>
<keyword id="KW-0813">Transport</keyword>
<accession>Q2K1C8</accession>
<sequence length="348" mass="38097">MAPINIVDVKKNYGSVPAVKGINLAVADGEFIVLVGPSGCGKSTLLRMIAGLESITGGRVEIGGRNVNKAEPAERDIAMVFQNYALYPHMTVRGNLEYGLKNRGTARAEIDRRVKEAADILEIGPMLDRKPRELSGGQRQRVAMGRAIVREPAAFLFDEPLSNLDAKLRVQMRVEIRRLQRRLKTTSIYVTHDQLEAMTLADRLVVMNGGLVEQVGTPVEVYDRPASLFVAGFIGSPPMNLVPIEVFHATESGGTLALPEGTDMVGLRPDALLLEKPAEPSIRLNAIVELLEPIGGESHLHVRLGEGQQTIVLTVQGRPDFAESARIDVFARIDQMHPFNSRTGRRTD</sequence>